<evidence type="ECO:0000255" key="1">
    <source>
        <dbReference type="HAMAP-Rule" id="MF_01367"/>
    </source>
</evidence>
<evidence type="ECO:0000305" key="2"/>
<sequence>MIQQETRLNVADNSGAKEAQCIRVLGSSGRRYAGIGDQIVVSVKSAIPSGEINKGDVSRAVVVRTAKETRREDGTYIRFDENAAVLINQEEEPVGTRVFGPVAREVREKQFMRIVSLAPEVL</sequence>
<organism>
    <name type="scientific">Salinibacter ruber (strain DSM 13855 / M31)</name>
    <dbReference type="NCBI Taxonomy" id="309807"/>
    <lineage>
        <taxon>Bacteria</taxon>
        <taxon>Pseudomonadati</taxon>
        <taxon>Rhodothermota</taxon>
        <taxon>Rhodothermia</taxon>
        <taxon>Rhodothermales</taxon>
        <taxon>Salinibacteraceae</taxon>
        <taxon>Salinibacter</taxon>
    </lineage>
</organism>
<keyword id="KW-1185">Reference proteome</keyword>
<keyword id="KW-0687">Ribonucleoprotein</keyword>
<keyword id="KW-0689">Ribosomal protein</keyword>
<keyword id="KW-0694">RNA-binding</keyword>
<keyword id="KW-0699">rRNA-binding</keyword>
<protein>
    <recommendedName>
        <fullName evidence="1">Large ribosomal subunit protein uL14</fullName>
    </recommendedName>
    <alternativeName>
        <fullName evidence="2">50S ribosomal protein L14</fullName>
    </alternativeName>
</protein>
<dbReference type="EMBL" id="CP000159">
    <property type="protein sequence ID" value="ABC44639.1"/>
    <property type="molecule type" value="Genomic_DNA"/>
</dbReference>
<dbReference type="RefSeq" id="WP_011403805.1">
    <property type="nucleotide sequence ID" value="NC_007677.1"/>
</dbReference>
<dbReference type="RefSeq" id="YP_445177.1">
    <property type="nucleotide sequence ID" value="NC_007677.1"/>
</dbReference>
<dbReference type="SMR" id="Q2S3Q4"/>
<dbReference type="STRING" id="309807.SRU_1045"/>
<dbReference type="EnsemblBacteria" id="ABC44639">
    <property type="protein sequence ID" value="ABC44639"/>
    <property type="gene ID" value="SRU_1045"/>
</dbReference>
<dbReference type="GeneID" id="83727974"/>
<dbReference type="KEGG" id="sru:SRU_1045"/>
<dbReference type="PATRIC" id="fig|309807.25.peg.1083"/>
<dbReference type="eggNOG" id="COG0093">
    <property type="taxonomic scope" value="Bacteria"/>
</dbReference>
<dbReference type="HOGENOM" id="CLU_095071_2_1_10"/>
<dbReference type="OrthoDB" id="9806379at2"/>
<dbReference type="Proteomes" id="UP000008674">
    <property type="component" value="Chromosome"/>
</dbReference>
<dbReference type="GO" id="GO:0022625">
    <property type="term" value="C:cytosolic large ribosomal subunit"/>
    <property type="evidence" value="ECO:0007669"/>
    <property type="project" value="TreeGrafter"/>
</dbReference>
<dbReference type="GO" id="GO:0070180">
    <property type="term" value="F:large ribosomal subunit rRNA binding"/>
    <property type="evidence" value="ECO:0007669"/>
    <property type="project" value="TreeGrafter"/>
</dbReference>
<dbReference type="GO" id="GO:0003735">
    <property type="term" value="F:structural constituent of ribosome"/>
    <property type="evidence" value="ECO:0007669"/>
    <property type="project" value="InterPro"/>
</dbReference>
<dbReference type="GO" id="GO:0006412">
    <property type="term" value="P:translation"/>
    <property type="evidence" value="ECO:0007669"/>
    <property type="project" value="UniProtKB-UniRule"/>
</dbReference>
<dbReference type="CDD" id="cd00337">
    <property type="entry name" value="Ribosomal_uL14"/>
    <property type="match status" value="1"/>
</dbReference>
<dbReference type="FunFam" id="2.40.150.20:FF:000001">
    <property type="entry name" value="50S ribosomal protein L14"/>
    <property type="match status" value="1"/>
</dbReference>
<dbReference type="Gene3D" id="2.40.150.20">
    <property type="entry name" value="Ribosomal protein L14"/>
    <property type="match status" value="1"/>
</dbReference>
<dbReference type="HAMAP" id="MF_01367">
    <property type="entry name" value="Ribosomal_uL14"/>
    <property type="match status" value="1"/>
</dbReference>
<dbReference type="InterPro" id="IPR000218">
    <property type="entry name" value="Ribosomal_uL14"/>
</dbReference>
<dbReference type="InterPro" id="IPR005745">
    <property type="entry name" value="Ribosomal_uL14_bac-type"/>
</dbReference>
<dbReference type="InterPro" id="IPR019972">
    <property type="entry name" value="Ribosomal_uL14_CS"/>
</dbReference>
<dbReference type="InterPro" id="IPR036853">
    <property type="entry name" value="Ribosomal_uL14_sf"/>
</dbReference>
<dbReference type="NCBIfam" id="TIGR01067">
    <property type="entry name" value="rplN_bact"/>
    <property type="match status" value="1"/>
</dbReference>
<dbReference type="PANTHER" id="PTHR11761">
    <property type="entry name" value="50S/60S RIBOSOMAL PROTEIN L14/L23"/>
    <property type="match status" value="1"/>
</dbReference>
<dbReference type="PANTHER" id="PTHR11761:SF3">
    <property type="entry name" value="LARGE RIBOSOMAL SUBUNIT PROTEIN UL14M"/>
    <property type="match status" value="1"/>
</dbReference>
<dbReference type="Pfam" id="PF00238">
    <property type="entry name" value="Ribosomal_L14"/>
    <property type="match status" value="1"/>
</dbReference>
<dbReference type="SMART" id="SM01374">
    <property type="entry name" value="Ribosomal_L14"/>
    <property type="match status" value="1"/>
</dbReference>
<dbReference type="SUPFAM" id="SSF50193">
    <property type="entry name" value="Ribosomal protein L14"/>
    <property type="match status" value="1"/>
</dbReference>
<dbReference type="PROSITE" id="PS00049">
    <property type="entry name" value="RIBOSOMAL_L14"/>
    <property type="match status" value="1"/>
</dbReference>
<name>RL14_SALRD</name>
<proteinExistence type="inferred from homology"/>
<reference key="1">
    <citation type="journal article" date="2005" name="Proc. Natl. Acad. Sci. U.S.A.">
        <title>The genome of Salinibacter ruber: convergence and gene exchange among hyperhalophilic bacteria and archaea.</title>
        <authorList>
            <person name="Mongodin E.F."/>
            <person name="Nelson K.E."/>
            <person name="Daugherty S."/>
            <person name="DeBoy R.T."/>
            <person name="Wister J."/>
            <person name="Khouri H."/>
            <person name="Weidman J."/>
            <person name="Walsh D.A."/>
            <person name="Papke R.T."/>
            <person name="Sanchez Perez G."/>
            <person name="Sharma A.K."/>
            <person name="Nesbo C.L."/>
            <person name="MacLeod D."/>
            <person name="Bapteste E."/>
            <person name="Doolittle W.F."/>
            <person name="Charlebois R.L."/>
            <person name="Legault B."/>
            <person name="Rodriguez-Valera F."/>
        </authorList>
    </citation>
    <scope>NUCLEOTIDE SEQUENCE [LARGE SCALE GENOMIC DNA]</scope>
    <source>
        <strain>DSM 13855 / CECT 5946 / M31</strain>
    </source>
</reference>
<gene>
    <name evidence="1" type="primary">rplN</name>
    <name type="ordered locus">SRU_1045</name>
</gene>
<comment type="function">
    <text evidence="1">Binds to 23S rRNA. Forms part of two intersubunit bridges in the 70S ribosome.</text>
</comment>
<comment type="subunit">
    <text evidence="1">Part of the 50S ribosomal subunit. Forms a cluster with proteins L3 and L19. In the 70S ribosome, L14 and L19 interact and together make contacts with the 16S rRNA in bridges B5 and B8.</text>
</comment>
<comment type="similarity">
    <text evidence="1">Belongs to the universal ribosomal protein uL14 family.</text>
</comment>
<accession>Q2S3Q4</accession>
<feature type="chain" id="PRO_0000266550" description="Large ribosomal subunit protein uL14">
    <location>
        <begin position="1"/>
        <end position="122"/>
    </location>
</feature>